<organism>
    <name type="scientific">Escherichia coli (strain K12)</name>
    <dbReference type="NCBI Taxonomy" id="83333"/>
    <lineage>
        <taxon>Bacteria</taxon>
        <taxon>Pseudomonadati</taxon>
        <taxon>Pseudomonadota</taxon>
        <taxon>Gammaproteobacteria</taxon>
        <taxon>Enterobacterales</taxon>
        <taxon>Enterobacteriaceae</taxon>
        <taxon>Escherichia</taxon>
    </lineage>
</organism>
<sequence>MASERSTDVQAFIGELDGGVFETKIGAVLSEVASGVMNTKTKGKVSLNLEIEPFDENRLKIKHKLSYVRPTNRGKISEEDTTETPMYVNRGGRLTILQEDQGQLLTLAGEPDGKLRAAGH</sequence>
<gene>
    <name type="primary">yfdP</name>
    <name type="ordered locus">b2359</name>
    <name type="ordered locus">JW2356</name>
</gene>
<reference key="1">
    <citation type="journal article" date="1997" name="Science">
        <title>The complete genome sequence of Escherichia coli K-12.</title>
        <authorList>
            <person name="Blattner F.R."/>
            <person name="Plunkett G. III"/>
            <person name="Bloch C.A."/>
            <person name="Perna N.T."/>
            <person name="Burland V."/>
            <person name="Riley M."/>
            <person name="Collado-Vides J."/>
            <person name="Glasner J.D."/>
            <person name="Rode C.K."/>
            <person name="Mayhew G.F."/>
            <person name="Gregor J."/>
            <person name="Davis N.W."/>
            <person name="Kirkpatrick H.A."/>
            <person name="Goeden M.A."/>
            <person name="Rose D.J."/>
            <person name="Mau B."/>
            <person name="Shao Y."/>
        </authorList>
    </citation>
    <scope>NUCLEOTIDE SEQUENCE [LARGE SCALE GENOMIC DNA]</scope>
    <source>
        <strain>K12 / MG1655 / ATCC 47076</strain>
    </source>
</reference>
<reference key="2">
    <citation type="journal article" date="2006" name="Mol. Syst. Biol.">
        <title>Highly accurate genome sequences of Escherichia coli K-12 strains MG1655 and W3110.</title>
        <authorList>
            <person name="Hayashi K."/>
            <person name="Morooka N."/>
            <person name="Yamamoto Y."/>
            <person name="Fujita K."/>
            <person name="Isono K."/>
            <person name="Choi S."/>
            <person name="Ohtsubo E."/>
            <person name="Baba T."/>
            <person name="Wanner B.L."/>
            <person name="Mori H."/>
            <person name="Horiuchi T."/>
        </authorList>
    </citation>
    <scope>NUCLEOTIDE SEQUENCE [LARGE SCALE GENOMIC DNA]</scope>
    <source>
        <strain>K12 / W3110 / ATCC 27325 / DSM 5911</strain>
    </source>
</reference>
<name>YFDP_ECOLI</name>
<accession>P76512</accession>
<accession>Q2MAK8</accession>
<evidence type="ECO:0000305" key="1"/>
<protein>
    <recommendedName>
        <fullName>Uncharacterized protein YfdP</fullName>
    </recommendedName>
</protein>
<dbReference type="EMBL" id="U00096">
    <property type="protein sequence ID" value="AAC75418.2"/>
    <property type="molecule type" value="Genomic_DNA"/>
</dbReference>
<dbReference type="EMBL" id="AP009048">
    <property type="protein sequence ID" value="BAE76698.1"/>
    <property type="status" value="ALT_INIT"/>
    <property type="molecule type" value="Genomic_DNA"/>
</dbReference>
<dbReference type="PIR" id="D65009">
    <property type="entry name" value="D65009"/>
</dbReference>
<dbReference type="RefSeq" id="NP_416860.4">
    <property type="nucleotide sequence ID" value="NC_000913.3"/>
</dbReference>
<dbReference type="RefSeq" id="WP_000135673.1">
    <property type="nucleotide sequence ID" value="NZ_LN832404.1"/>
</dbReference>
<dbReference type="BioGRID" id="4260547">
    <property type="interactions" value="19"/>
</dbReference>
<dbReference type="DIP" id="DIP-12004N"/>
<dbReference type="FunCoup" id="P76512">
    <property type="interactions" value="68"/>
</dbReference>
<dbReference type="IntAct" id="P76512">
    <property type="interactions" value="4"/>
</dbReference>
<dbReference type="STRING" id="511145.b2359"/>
<dbReference type="PaxDb" id="511145-b2359"/>
<dbReference type="EnsemblBacteria" id="AAC75418">
    <property type="protein sequence ID" value="AAC75418"/>
    <property type="gene ID" value="b2359"/>
</dbReference>
<dbReference type="GeneID" id="945565"/>
<dbReference type="KEGG" id="ecj:JW2356"/>
<dbReference type="KEGG" id="eco:b2359"/>
<dbReference type="KEGG" id="ecoc:C3026_13120"/>
<dbReference type="PATRIC" id="fig|511145.12.peg.2456"/>
<dbReference type="eggNOG" id="ENOG5030WBS">
    <property type="taxonomic scope" value="Bacteria"/>
</dbReference>
<dbReference type="HOGENOM" id="CLU_138531_0_1_6"/>
<dbReference type="InParanoid" id="P76512"/>
<dbReference type="OrthoDB" id="9156612at2"/>
<dbReference type="BioCyc" id="EcoCyc:G7228-MONOMER"/>
<dbReference type="PRO" id="PR:P76512"/>
<dbReference type="Proteomes" id="UP000000625">
    <property type="component" value="Chromosome"/>
</dbReference>
<proteinExistence type="predicted"/>
<keyword id="KW-1185">Reference proteome</keyword>
<comment type="similarity">
    <text evidence="1">To phage T4 y06Q.</text>
</comment>
<comment type="sequence caution" evidence="1">
    <conflict type="erroneous initiation">
        <sequence resource="EMBL-CDS" id="BAE76698"/>
    </conflict>
</comment>
<feature type="chain" id="PRO_0000169209" description="Uncharacterized protein YfdP">
    <location>
        <begin position="1"/>
        <end position="120"/>
    </location>
</feature>